<organism>
    <name type="scientific">Bifidobacterium longum subsp. infantis (strain ATCC 15697 / DSM 20088 / JCM 1222 / NCTC 11817 / S12)</name>
    <dbReference type="NCBI Taxonomy" id="391904"/>
    <lineage>
        <taxon>Bacteria</taxon>
        <taxon>Bacillati</taxon>
        <taxon>Actinomycetota</taxon>
        <taxon>Actinomycetes</taxon>
        <taxon>Bifidobacteriales</taxon>
        <taxon>Bifidobacteriaceae</taxon>
        <taxon>Bifidobacterium</taxon>
    </lineage>
</organism>
<keyword id="KW-0456">Lyase</keyword>
<keyword id="KW-0663">Pyridoxal phosphate</keyword>
<keyword id="KW-0704">Schiff base</keyword>
<protein>
    <recommendedName>
        <fullName evidence="1">Pyridoxal 5'-phosphate synthase subunit PdxS</fullName>
        <shortName evidence="1">PLP synthase subunit PdxS</shortName>
        <ecNumber evidence="1">4.3.3.6</ecNumber>
    </recommendedName>
    <alternativeName>
        <fullName evidence="1">Pdx1</fullName>
    </alternativeName>
</protein>
<dbReference type="EC" id="4.3.3.6" evidence="1"/>
<dbReference type="EMBL" id="CP001095">
    <property type="protein sequence ID" value="ACJ53061.1"/>
    <property type="molecule type" value="Genomic_DNA"/>
</dbReference>
<dbReference type="EMBL" id="AP010889">
    <property type="protein sequence ID" value="BAJ69646.1"/>
    <property type="molecule type" value="Genomic_DNA"/>
</dbReference>
<dbReference type="RefSeq" id="WP_007053677.1">
    <property type="nucleotide sequence ID" value="NZ_JDTT01000005.1"/>
</dbReference>
<dbReference type="SMR" id="B7GUB5"/>
<dbReference type="GeneID" id="69577706"/>
<dbReference type="KEGG" id="bln:Blon_1994"/>
<dbReference type="KEGG" id="blon:BLIJ_2068"/>
<dbReference type="PATRIC" id="fig|391904.8.peg.2074"/>
<dbReference type="HOGENOM" id="CLU_055352_1_0_11"/>
<dbReference type="UniPathway" id="UPA00245"/>
<dbReference type="Proteomes" id="UP000001360">
    <property type="component" value="Chromosome"/>
</dbReference>
<dbReference type="GO" id="GO:0036381">
    <property type="term" value="F:pyridoxal 5'-phosphate synthase (glutamine hydrolysing) activity"/>
    <property type="evidence" value="ECO:0007669"/>
    <property type="project" value="UniProtKB-UniRule"/>
</dbReference>
<dbReference type="GO" id="GO:0006520">
    <property type="term" value="P:amino acid metabolic process"/>
    <property type="evidence" value="ECO:0007669"/>
    <property type="project" value="TreeGrafter"/>
</dbReference>
<dbReference type="GO" id="GO:0042823">
    <property type="term" value="P:pyridoxal phosphate biosynthetic process"/>
    <property type="evidence" value="ECO:0007669"/>
    <property type="project" value="UniProtKB-UniRule"/>
</dbReference>
<dbReference type="GO" id="GO:0008615">
    <property type="term" value="P:pyridoxine biosynthetic process"/>
    <property type="evidence" value="ECO:0007669"/>
    <property type="project" value="TreeGrafter"/>
</dbReference>
<dbReference type="CDD" id="cd04727">
    <property type="entry name" value="pdxS"/>
    <property type="match status" value="1"/>
</dbReference>
<dbReference type="FunFam" id="3.20.20.70:FF:000001">
    <property type="entry name" value="Pyridoxine biosynthesis protein PDX1"/>
    <property type="match status" value="1"/>
</dbReference>
<dbReference type="Gene3D" id="3.20.20.70">
    <property type="entry name" value="Aldolase class I"/>
    <property type="match status" value="1"/>
</dbReference>
<dbReference type="HAMAP" id="MF_01824">
    <property type="entry name" value="PdxS"/>
    <property type="match status" value="1"/>
</dbReference>
<dbReference type="InterPro" id="IPR013785">
    <property type="entry name" value="Aldolase_TIM"/>
</dbReference>
<dbReference type="InterPro" id="IPR001852">
    <property type="entry name" value="PdxS/SNZ"/>
</dbReference>
<dbReference type="InterPro" id="IPR033755">
    <property type="entry name" value="PdxS/SNZ_N"/>
</dbReference>
<dbReference type="InterPro" id="IPR011060">
    <property type="entry name" value="RibuloseP-bd_barrel"/>
</dbReference>
<dbReference type="NCBIfam" id="NF003215">
    <property type="entry name" value="PRK04180.1"/>
    <property type="match status" value="1"/>
</dbReference>
<dbReference type="NCBIfam" id="TIGR00343">
    <property type="entry name" value="pyridoxal 5'-phosphate synthase lyase subunit PdxS"/>
    <property type="match status" value="1"/>
</dbReference>
<dbReference type="PANTHER" id="PTHR31829">
    <property type="entry name" value="PYRIDOXAL 5'-PHOSPHATE SYNTHASE SUBUNIT SNZ1-RELATED"/>
    <property type="match status" value="1"/>
</dbReference>
<dbReference type="PANTHER" id="PTHR31829:SF0">
    <property type="entry name" value="PYRIDOXAL 5'-PHOSPHATE SYNTHASE SUBUNIT SNZ1-RELATED"/>
    <property type="match status" value="1"/>
</dbReference>
<dbReference type="Pfam" id="PF01680">
    <property type="entry name" value="SOR_SNZ"/>
    <property type="match status" value="1"/>
</dbReference>
<dbReference type="PIRSF" id="PIRSF029271">
    <property type="entry name" value="Pdx1"/>
    <property type="match status" value="1"/>
</dbReference>
<dbReference type="SUPFAM" id="SSF51366">
    <property type="entry name" value="Ribulose-phoshate binding barrel"/>
    <property type="match status" value="1"/>
</dbReference>
<dbReference type="PROSITE" id="PS01235">
    <property type="entry name" value="PDXS_SNZ_1"/>
    <property type="match status" value="1"/>
</dbReference>
<dbReference type="PROSITE" id="PS51129">
    <property type="entry name" value="PDXS_SNZ_2"/>
    <property type="match status" value="1"/>
</dbReference>
<reference key="1">
    <citation type="journal article" date="2008" name="Proc. Natl. Acad. Sci. U.S.A.">
        <title>The genome sequence of Bifidobacterium longum subsp. infantis reveals adaptations for milk utilization within the infant microbiome.</title>
        <authorList>
            <person name="Sela D.A."/>
            <person name="Chapman J."/>
            <person name="Adeuya A."/>
            <person name="Kim J.H."/>
            <person name="Chen F."/>
            <person name="Whitehead T.R."/>
            <person name="Lapidus A."/>
            <person name="Rokhsar D.S."/>
            <person name="Lebrilla C.B."/>
            <person name="German J.B."/>
            <person name="Price N.P."/>
            <person name="Richardson P.M."/>
            <person name="Mills D.A."/>
        </authorList>
    </citation>
    <scope>NUCLEOTIDE SEQUENCE [LARGE SCALE GENOMIC DNA]</scope>
    <source>
        <strain>ATCC 15697 / DSM 20088 / JCM 1222 / NCTC 11817 / S12</strain>
    </source>
</reference>
<reference key="2">
    <citation type="journal article" date="2011" name="Nature">
        <title>Bifidobacteria can protect from enteropathogenic infection through production of acetate.</title>
        <authorList>
            <person name="Fukuda S."/>
            <person name="Toh H."/>
            <person name="Hase K."/>
            <person name="Oshima K."/>
            <person name="Nakanishi Y."/>
            <person name="Yoshimura K."/>
            <person name="Tobe T."/>
            <person name="Clarke J.M."/>
            <person name="Topping D.L."/>
            <person name="Suzuki T."/>
            <person name="Taylor T.D."/>
            <person name="Itoh K."/>
            <person name="Kikuchi J."/>
            <person name="Morita H."/>
            <person name="Hattori M."/>
            <person name="Ohno H."/>
        </authorList>
    </citation>
    <scope>NUCLEOTIDE SEQUENCE [LARGE SCALE GENOMIC DNA]</scope>
    <source>
        <strain>ATCC 15697 / DSM 20088 / JCM 1222 / NCTC 11817 / S12</strain>
    </source>
</reference>
<feature type="chain" id="PRO_1000188215" description="Pyridoxal 5'-phosphate synthase subunit PdxS">
    <location>
        <begin position="1"/>
        <end position="291"/>
    </location>
</feature>
<feature type="active site" description="Schiff-base intermediate with D-ribose 5-phosphate" evidence="1">
    <location>
        <position position="80"/>
    </location>
</feature>
<feature type="binding site" evidence="1">
    <location>
        <position position="23"/>
    </location>
    <ligand>
        <name>D-ribose 5-phosphate</name>
        <dbReference type="ChEBI" id="CHEBI:78346"/>
    </ligand>
</feature>
<feature type="binding site" evidence="1">
    <location>
        <position position="152"/>
    </location>
    <ligand>
        <name>D-ribose 5-phosphate</name>
        <dbReference type="ChEBI" id="CHEBI:78346"/>
    </ligand>
</feature>
<feature type="binding site" evidence="1">
    <location>
        <position position="164"/>
    </location>
    <ligand>
        <name>D-glyceraldehyde 3-phosphate</name>
        <dbReference type="ChEBI" id="CHEBI:59776"/>
    </ligand>
</feature>
<feature type="binding site" evidence="1">
    <location>
        <position position="213"/>
    </location>
    <ligand>
        <name>D-ribose 5-phosphate</name>
        <dbReference type="ChEBI" id="CHEBI:78346"/>
    </ligand>
</feature>
<feature type="binding site" evidence="1">
    <location>
        <begin position="234"/>
        <end position="235"/>
    </location>
    <ligand>
        <name>D-ribose 5-phosphate</name>
        <dbReference type="ChEBI" id="CHEBI:78346"/>
    </ligand>
</feature>
<proteinExistence type="inferred from homology"/>
<gene>
    <name evidence="1" type="primary">pdxS</name>
    <name type="ordered locus">Blon_1994</name>
    <name type="ordered locus">BLIJ_2068</name>
</gene>
<name>PDXS_BIFLS</name>
<evidence type="ECO:0000255" key="1">
    <source>
        <dbReference type="HAMAP-Rule" id="MF_01824"/>
    </source>
</evidence>
<accession>B7GUB5</accession>
<accession>E8MM69</accession>
<comment type="function">
    <text evidence="1">Catalyzes the formation of pyridoxal 5'-phosphate from ribose 5-phosphate (RBP), glyceraldehyde 3-phosphate (G3P) and ammonia. The ammonia is provided by the PdxT subunit. Can also use ribulose 5-phosphate and dihydroxyacetone phosphate as substrates, resulting from enzyme-catalyzed isomerization of RBP and G3P, respectively.</text>
</comment>
<comment type="catalytic activity">
    <reaction evidence="1">
        <text>aldehydo-D-ribose 5-phosphate + D-glyceraldehyde 3-phosphate + L-glutamine = pyridoxal 5'-phosphate + L-glutamate + phosphate + 3 H2O + H(+)</text>
        <dbReference type="Rhea" id="RHEA:31507"/>
        <dbReference type="ChEBI" id="CHEBI:15377"/>
        <dbReference type="ChEBI" id="CHEBI:15378"/>
        <dbReference type="ChEBI" id="CHEBI:29985"/>
        <dbReference type="ChEBI" id="CHEBI:43474"/>
        <dbReference type="ChEBI" id="CHEBI:58273"/>
        <dbReference type="ChEBI" id="CHEBI:58359"/>
        <dbReference type="ChEBI" id="CHEBI:59776"/>
        <dbReference type="ChEBI" id="CHEBI:597326"/>
        <dbReference type="EC" id="4.3.3.6"/>
    </reaction>
</comment>
<comment type="pathway">
    <text evidence="1">Cofactor biosynthesis; pyridoxal 5'-phosphate biosynthesis.</text>
</comment>
<comment type="subunit">
    <text evidence="1">In the presence of PdxT, forms a dodecamer of heterodimers.</text>
</comment>
<comment type="similarity">
    <text evidence="1">Belongs to the PdxS/SNZ family.</text>
</comment>
<sequence length="291" mass="31106">MTQNRAELNRNLAQMLKGGVIMDVTTPEQAKIAQDAGACAVMALERIPADIRAAGGVSRMSDPAMIKGIQEAVSIPVMAKVRIGHIAEARILQAIEIDYIDESEVLSPADDVYHIDKNQFDVPFVCGAKNLGEALRRIAEGAAMIRTKGEPGTGDVIQAVRHMRTMNKQIRELVGLRDDEVYEAAKQLAVPYDLAKYVHDNGRLPVVNFAAGGVATPADAALMMELGAEGVFVGSGIFKSGDPAKRAAAIVKATANWQDADLLAKLSENLGEAMVGINEDEIQTIMAARGE</sequence>